<name>GCH1_SHEB2</name>
<accession>B8E4J0</accession>
<feature type="chain" id="PRO_1000124927" description="GTP cyclohydrolase 1">
    <location>
        <begin position="1"/>
        <end position="216"/>
    </location>
</feature>
<feature type="binding site" evidence="1">
    <location>
        <position position="108"/>
    </location>
    <ligand>
        <name>Zn(2+)</name>
        <dbReference type="ChEBI" id="CHEBI:29105"/>
    </ligand>
</feature>
<feature type="binding site" evidence="1">
    <location>
        <position position="111"/>
    </location>
    <ligand>
        <name>Zn(2+)</name>
        <dbReference type="ChEBI" id="CHEBI:29105"/>
    </ligand>
</feature>
<feature type="binding site" evidence="1">
    <location>
        <position position="179"/>
    </location>
    <ligand>
        <name>Zn(2+)</name>
        <dbReference type="ChEBI" id="CHEBI:29105"/>
    </ligand>
</feature>
<sequence>MALSEAAVKVQAALLERGLETPMLPSVYSSEERKDKIEHHMKEILTLMSLDLSDDSLADTPRRIAKMYVDEIFSGLDYANFPKITVIDNKMGFDEMVRVQDISLTSTCEHHLVTIDGTATIAYLPRKKIIGLSKINRIVRFFAQRPQVQERLTQQVLVALQTLLETKDVAVKMDAVHYCVKSRGVMDSTSSTTTTALGGIFKSNPATRAEFLHQSK</sequence>
<organism>
    <name type="scientific">Shewanella baltica (strain OS223)</name>
    <dbReference type="NCBI Taxonomy" id="407976"/>
    <lineage>
        <taxon>Bacteria</taxon>
        <taxon>Pseudomonadati</taxon>
        <taxon>Pseudomonadota</taxon>
        <taxon>Gammaproteobacteria</taxon>
        <taxon>Alteromonadales</taxon>
        <taxon>Shewanellaceae</taxon>
        <taxon>Shewanella</taxon>
    </lineage>
</organism>
<reference key="1">
    <citation type="submission" date="2008-12" db="EMBL/GenBank/DDBJ databases">
        <title>Complete sequence of chromosome of Shewanella baltica OS223.</title>
        <authorList>
            <consortium name="US DOE Joint Genome Institute"/>
            <person name="Lucas S."/>
            <person name="Copeland A."/>
            <person name="Lapidus A."/>
            <person name="Glavina del Rio T."/>
            <person name="Dalin E."/>
            <person name="Tice H."/>
            <person name="Bruce D."/>
            <person name="Goodwin L."/>
            <person name="Pitluck S."/>
            <person name="Chertkov O."/>
            <person name="Meincke L."/>
            <person name="Brettin T."/>
            <person name="Detter J.C."/>
            <person name="Han C."/>
            <person name="Kuske C.R."/>
            <person name="Larimer F."/>
            <person name="Land M."/>
            <person name="Hauser L."/>
            <person name="Kyrpides N."/>
            <person name="Ovchinnikova G."/>
            <person name="Brettar I."/>
            <person name="Rodrigues J."/>
            <person name="Konstantinidis K."/>
            <person name="Tiedje J."/>
        </authorList>
    </citation>
    <scope>NUCLEOTIDE SEQUENCE [LARGE SCALE GENOMIC DNA]</scope>
    <source>
        <strain>OS223</strain>
    </source>
</reference>
<protein>
    <recommendedName>
        <fullName evidence="1">GTP cyclohydrolase 1</fullName>
        <ecNumber evidence="1">3.5.4.16</ecNumber>
    </recommendedName>
    <alternativeName>
        <fullName evidence="1">GTP cyclohydrolase I</fullName>
        <shortName evidence="1">GTP-CH-I</shortName>
    </alternativeName>
</protein>
<comment type="catalytic activity">
    <reaction evidence="1">
        <text>GTP + H2O = 7,8-dihydroneopterin 3'-triphosphate + formate + H(+)</text>
        <dbReference type="Rhea" id="RHEA:17473"/>
        <dbReference type="ChEBI" id="CHEBI:15377"/>
        <dbReference type="ChEBI" id="CHEBI:15378"/>
        <dbReference type="ChEBI" id="CHEBI:15740"/>
        <dbReference type="ChEBI" id="CHEBI:37565"/>
        <dbReference type="ChEBI" id="CHEBI:58462"/>
        <dbReference type="EC" id="3.5.4.16"/>
    </reaction>
</comment>
<comment type="pathway">
    <text evidence="1">Cofactor biosynthesis; 7,8-dihydroneopterin triphosphate biosynthesis; 7,8-dihydroneopterin triphosphate from GTP: step 1/1.</text>
</comment>
<comment type="subunit">
    <text evidence="1">Homomer.</text>
</comment>
<comment type="similarity">
    <text evidence="1">Belongs to the GTP cyclohydrolase I family.</text>
</comment>
<evidence type="ECO:0000255" key="1">
    <source>
        <dbReference type="HAMAP-Rule" id="MF_00223"/>
    </source>
</evidence>
<gene>
    <name evidence="1" type="primary">folE</name>
    <name type="ordered locus">Sbal223_0397</name>
</gene>
<keyword id="KW-0342">GTP-binding</keyword>
<keyword id="KW-0378">Hydrolase</keyword>
<keyword id="KW-0479">Metal-binding</keyword>
<keyword id="KW-0547">Nucleotide-binding</keyword>
<keyword id="KW-0554">One-carbon metabolism</keyword>
<keyword id="KW-0862">Zinc</keyword>
<proteinExistence type="inferred from homology"/>
<dbReference type="EC" id="3.5.4.16" evidence="1"/>
<dbReference type="EMBL" id="CP001252">
    <property type="protein sequence ID" value="ACK44931.1"/>
    <property type="molecule type" value="Genomic_DNA"/>
</dbReference>
<dbReference type="RefSeq" id="WP_006079864.1">
    <property type="nucleotide sequence ID" value="NC_011663.1"/>
</dbReference>
<dbReference type="SMR" id="B8E4J0"/>
<dbReference type="GeneID" id="11770722"/>
<dbReference type="KEGG" id="sbp:Sbal223_0397"/>
<dbReference type="HOGENOM" id="CLU_049768_3_2_6"/>
<dbReference type="UniPathway" id="UPA00848">
    <property type="reaction ID" value="UER00151"/>
</dbReference>
<dbReference type="Proteomes" id="UP000002507">
    <property type="component" value="Chromosome"/>
</dbReference>
<dbReference type="GO" id="GO:0005737">
    <property type="term" value="C:cytoplasm"/>
    <property type="evidence" value="ECO:0007669"/>
    <property type="project" value="TreeGrafter"/>
</dbReference>
<dbReference type="GO" id="GO:0005525">
    <property type="term" value="F:GTP binding"/>
    <property type="evidence" value="ECO:0007669"/>
    <property type="project" value="UniProtKB-KW"/>
</dbReference>
<dbReference type="GO" id="GO:0003934">
    <property type="term" value="F:GTP cyclohydrolase I activity"/>
    <property type="evidence" value="ECO:0007669"/>
    <property type="project" value="UniProtKB-UniRule"/>
</dbReference>
<dbReference type="GO" id="GO:0008270">
    <property type="term" value="F:zinc ion binding"/>
    <property type="evidence" value="ECO:0007669"/>
    <property type="project" value="UniProtKB-UniRule"/>
</dbReference>
<dbReference type="GO" id="GO:0006730">
    <property type="term" value="P:one-carbon metabolic process"/>
    <property type="evidence" value="ECO:0007669"/>
    <property type="project" value="UniProtKB-UniRule"/>
</dbReference>
<dbReference type="GO" id="GO:0006729">
    <property type="term" value="P:tetrahydrobiopterin biosynthetic process"/>
    <property type="evidence" value="ECO:0007669"/>
    <property type="project" value="TreeGrafter"/>
</dbReference>
<dbReference type="GO" id="GO:0046654">
    <property type="term" value="P:tetrahydrofolate biosynthetic process"/>
    <property type="evidence" value="ECO:0007669"/>
    <property type="project" value="UniProtKB-UniRule"/>
</dbReference>
<dbReference type="FunFam" id="1.10.286.10:FF:000002">
    <property type="entry name" value="GTP cyclohydrolase 1"/>
    <property type="match status" value="1"/>
</dbReference>
<dbReference type="FunFam" id="3.30.1130.10:FF:000001">
    <property type="entry name" value="GTP cyclohydrolase 1"/>
    <property type="match status" value="1"/>
</dbReference>
<dbReference type="Gene3D" id="1.10.286.10">
    <property type="match status" value="1"/>
</dbReference>
<dbReference type="Gene3D" id="3.30.1130.10">
    <property type="match status" value="1"/>
</dbReference>
<dbReference type="HAMAP" id="MF_00223">
    <property type="entry name" value="FolE"/>
    <property type="match status" value="1"/>
</dbReference>
<dbReference type="InterPro" id="IPR043133">
    <property type="entry name" value="GTP-CH-I_C/QueF"/>
</dbReference>
<dbReference type="InterPro" id="IPR043134">
    <property type="entry name" value="GTP-CH-I_N"/>
</dbReference>
<dbReference type="InterPro" id="IPR001474">
    <property type="entry name" value="GTP_CycHdrlase_I"/>
</dbReference>
<dbReference type="InterPro" id="IPR018234">
    <property type="entry name" value="GTP_CycHdrlase_I_CS"/>
</dbReference>
<dbReference type="InterPro" id="IPR020602">
    <property type="entry name" value="GTP_CycHdrlase_I_dom"/>
</dbReference>
<dbReference type="NCBIfam" id="TIGR00063">
    <property type="entry name" value="folE"/>
    <property type="match status" value="1"/>
</dbReference>
<dbReference type="NCBIfam" id="NF006824">
    <property type="entry name" value="PRK09347.1-1"/>
    <property type="match status" value="1"/>
</dbReference>
<dbReference type="NCBIfam" id="NF006826">
    <property type="entry name" value="PRK09347.1-3"/>
    <property type="match status" value="1"/>
</dbReference>
<dbReference type="PANTHER" id="PTHR11109:SF7">
    <property type="entry name" value="GTP CYCLOHYDROLASE 1"/>
    <property type="match status" value="1"/>
</dbReference>
<dbReference type="PANTHER" id="PTHR11109">
    <property type="entry name" value="GTP CYCLOHYDROLASE I"/>
    <property type="match status" value="1"/>
</dbReference>
<dbReference type="Pfam" id="PF01227">
    <property type="entry name" value="GTP_cyclohydroI"/>
    <property type="match status" value="1"/>
</dbReference>
<dbReference type="SUPFAM" id="SSF55620">
    <property type="entry name" value="Tetrahydrobiopterin biosynthesis enzymes-like"/>
    <property type="match status" value="1"/>
</dbReference>
<dbReference type="PROSITE" id="PS00859">
    <property type="entry name" value="GTP_CYCLOHYDROL_1_1"/>
    <property type="match status" value="1"/>
</dbReference>
<dbReference type="PROSITE" id="PS00860">
    <property type="entry name" value="GTP_CYCLOHYDROL_1_2"/>
    <property type="match status" value="1"/>
</dbReference>